<gene>
    <name evidence="1" type="primary">hisS</name>
    <name type="ordered locus">Hac_1566</name>
</gene>
<keyword id="KW-0030">Aminoacyl-tRNA synthetase</keyword>
<keyword id="KW-0067">ATP-binding</keyword>
<keyword id="KW-0963">Cytoplasm</keyword>
<keyword id="KW-0436">Ligase</keyword>
<keyword id="KW-0547">Nucleotide-binding</keyword>
<keyword id="KW-0648">Protein biosynthesis</keyword>
<accession>Q17VP5</accession>
<reference key="1">
    <citation type="journal article" date="2006" name="PLoS Genet.">
        <title>Who ate whom? Adaptive Helicobacter genomic changes that accompanied a host jump from early humans to large felines.</title>
        <authorList>
            <person name="Eppinger M."/>
            <person name="Baar C."/>
            <person name="Linz B."/>
            <person name="Raddatz G."/>
            <person name="Lanz C."/>
            <person name="Keller H."/>
            <person name="Morelli G."/>
            <person name="Gressmann H."/>
            <person name="Achtman M."/>
            <person name="Schuster S.C."/>
        </authorList>
    </citation>
    <scope>NUCLEOTIDE SEQUENCE [LARGE SCALE GENOMIC DNA]</scope>
    <source>
        <strain>Sheeba</strain>
    </source>
</reference>
<name>SYH_HELAH</name>
<evidence type="ECO:0000255" key="1">
    <source>
        <dbReference type="HAMAP-Rule" id="MF_00127"/>
    </source>
</evidence>
<organism>
    <name type="scientific">Helicobacter acinonychis (strain Sheeba)</name>
    <dbReference type="NCBI Taxonomy" id="382638"/>
    <lineage>
        <taxon>Bacteria</taxon>
        <taxon>Pseudomonadati</taxon>
        <taxon>Campylobacterota</taxon>
        <taxon>Epsilonproteobacteria</taxon>
        <taxon>Campylobacterales</taxon>
        <taxon>Helicobacteraceae</taxon>
        <taxon>Helicobacter</taxon>
    </lineage>
</organism>
<protein>
    <recommendedName>
        <fullName evidence="1">Histidine--tRNA ligase</fullName>
        <ecNumber evidence="1">6.1.1.21</ecNumber>
    </recommendedName>
    <alternativeName>
        <fullName evidence="1">Histidyl-tRNA synthetase</fullName>
        <shortName evidence="1">HisRS</shortName>
    </alternativeName>
</protein>
<dbReference type="EC" id="6.1.1.21" evidence="1"/>
<dbReference type="EMBL" id="AM260522">
    <property type="protein sequence ID" value="CAK00281.1"/>
    <property type="molecule type" value="Genomic_DNA"/>
</dbReference>
<dbReference type="RefSeq" id="WP_011578366.1">
    <property type="nucleotide sequence ID" value="NC_008229.1"/>
</dbReference>
<dbReference type="SMR" id="Q17VP5"/>
<dbReference type="STRING" id="382638.Hac_1566"/>
<dbReference type="GeneID" id="31758823"/>
<dbReference type="KEGG" id="hac:Hac_1566"/>
<dbReference type="eggNOG" id="COG0124">
    <property type="taxonomic scope" value="Bacteria"/>
</dbReference>
<dbReference type="HOGENOM" id="CLU_025113_3_0_7"/>
<dbReference type="OrthoDB" id="9800814at2"/>
<dbReference type="BioCyc" id="HACI382638:HAC_RS06610-MONOMER"/>
<dbReference type="Proteomes" id="UP000000775">
    <property type="component" value="Chromosome"/>
</dbReference>
<dbReference type="GO" id="GO:0005737">
    <property type="term" value="C:cytoplasm"/>
    <property type="evidence" value="ECO:0007669"/>
    <property type="project" value="UniProtKB-SubCell"/>
</dbReference>
<dbReference type="GO" id="GO:0005524">
    <property type="term" value="F:ATP binding"/>
    <property type="evidence" value="ECO:0007669"/>
    <property type="project" value="UniProtKB-UniRule"/>
</dbReference>
<dbReference type="GO" id="GO:0004821">
    <property type="term" value="F:histidine-tRNA ligase activity"/>
    <property type="evidence" value="ECO:0007669"/>
    <property type="project" value="UniProtKB-UniRule"/>
</dbReference>
<dbReference type="GO" id="GO:0006427">
    <property type="term" value="P:histidyl-tRNA aminoacylation"/>
    <property type="evidence" value="ECO:0007669"/>
    <property type="project" value="UniProtKB-UniRule"/>
</dbReference>
<dbReference type="CDD" id="cd00773">
    <property type="entry name" value="HisRS-like_core"/>
    <property type="match status" value="1"/>
</dbReference>
<dbReference type="CDD" id="cd00859">
    <property type="entry name" value="HisRS_anticodon"/>
    <property type="match status" value="1"/>
</dbReference>
<dbReference type="Gene3D" id="3.40.50.800">
    <property type="entry name" value="Anticodon-binding domain"/>
    <property type="match status" value="1"/>
</dbReference>
<dbReference type="Gene3D" id="3.30.930.10">
    <property type="entry name" value="Bira Bifunctional Protein, Domain 2"/>
    <property type="match status" value="1"/>
</dbReference>
<dbReference type="HAMAP" id="MF_00127">
    <property type="entry name" value="His_tRNA_synth"/>
    <property type="match status" value="1"/>
</dbReference>
<dbReference type="InterPro" id="IPR006195">
    <property type="entry name" value="aa-tRNA-synth_II"/>
</dbReference>
<dbReference type="InterPro" id="IPR045864">
    <property type="entry name" value="aa-tRNA-synth_II/BPL/LPL"/>
</dbReference>
<dbReference type="InterPro" id="IPR004154">
    <property type="entry name" value="Anticodon-bd"/>
</dbReference>
<dbReference type="InterPro" id="IPR036621">
    <property type="entry name" value="Anticodon-bd_dom_sf"/>
</dbReference>
<dbReference type="InterPro" id="IPR015807">
    <property type="entry name" value="His-tRNA-ligase"/>
</dbReference>
<dbReference type="InterPro" id="IPR041715">
    <property type="entry name" value="HisRS-like_core"/>
</dbReference>
<dbReference type="InterPro" id="IPR004516">
    <property type="entry name" value="HisRS/HisZ"/>
</dbReference>
<dbReference type="InterPro" id="IPR033656">
    <property type="entry name" value="HisRS_anticodon"/>
</dbReference>
<dbReference type="NCBIfam" id="TIGR00442">
    <property type="entry name" value="hisS"/>
    <property type="match status" value="1"/>
</dbReference>
<dbReference type="PANTHER" id="PTHR11476:SF7">
    <property type="entry name" value="HISTIDINE--TRNA LIGASE"/>
    <property type="match status" value="1"/>
</dbReference>
<dbReference type="PANTHER" id="PTHR11476">
    <property type="entry name" value="HISTIDYL-TRNA SYNTHETASE"/>
    <property type="match status" value="1"/>
</dbReference>
<dbReference type="Pfam" id="PF03129">
    <property type="entry name" value="HGTP_anticodon"/>
    <property type="match status" value="1"/>
</dbReference>
<dbReference type="Pfam" id="PF13393">
    <property type="entry name" value="tRNA-synt_His"/>
    <property type="match status" value="1"/>
</dbReference>
<dbReference type="PIRSF" id="PIRSF001549">
    <property type="entry name" value="His-tRNA_synth"/>
    <property type="match status" value="1"/>
</dbReference>
<dbReference type="SUPFAM" id="SSF52954">
    <property type="entry name" value="Class II aaRS ABD-related"/>
    <property type="match status" value="1"/>
</dbReference>
<dbReference type="SUPFAM" id="SSF55681">
    <property type="entry name" value="Class II aaRS and biotin synthetases"/>
    <property type="match status" value="1"/>
</dbReference>
<dbReference type="PROSITE" id="PS50862">
    <property type="entry name" value="AA_TRNA_LIGASE_II"/>
    <property type="match status" value="1"/>
</dbReference>
<comment type="catalytic activity">
    <reaction evidence="1">
        <text>tRNA(His) + L-histidine + ATP = L-histidyl-tRNA(His) + AMP + diphosphate + H(+)</text>
        <dbReference type="Rhea" id="RHEA:17313"/>
        <dbReference type="Rhea" id="RHEA-COMP:9665"/>
        <dbReference type="Rhea" id="RHEA-COMP:9689"/>
        <dbReference type="ChEBI" id="CHEBI:15378"/>
        <dbReference type="ChEBI" id="CHEBI:30616"/>
        <dbReference type="ChEBI" id="CHEBI:33019"/>
        <dbReference type="ChEBI" id="CHEBI:57595"/>
        <dbReference type="ChEBI" id="CHEBI:78442"/>
        <dbReference type="ChEBI" id="CHEBI:78527"/>
        <dbReference type="ChEBI" id="CHEBI:456215"/>
        <dbReference type="EC" id="6.1.1.21"/>
    </reaction>
</comment>
<comment type="subunit">
    <text evidence="1">Homodimer.</text>
</comment>
<comment type="subcellular location">
    <subcellularLocation>
        <location evidence="1">Cytoplasm</location>
    </subcellularLocation>
</comment>
<comment type="similarity">
    <text evidence="1">Belongs to the class-II aminoacyl-tRNA synthetase family.</text>
</comment>
<feature type="chain" id="PRO_1000016372" description="Histidine--tRNA ligase">
    <location>
        <begin position="1"/>
        <end position="442"/>
    </location>
</feature>
<sequence length="442" mass="49919">MITPKVLSGFKDRLPKDAIQKAQLLSKVSVVFQSFGFVPIETPHLEYAETLLPDASSDIQKEIYRFKDHGGRDVALRFDLTVPLARFVSLYHQTLGMPFKRYAIGNVFRGERAQKGRYREFTQCDFDFIGSESLVCDAEIIQVVIASLKALDLEDFCVSINHRKILNGICEYFGISQVTGVLRIVDKLEKIGLNGVEEELKKECDLNPNTIKGLLEMVQIKQDDLSHAEFFEKIAYLKDCNENLKKGIQDLEKLYQLLGDLQISQNLYKIDFSIARGLGYYTGIVYETTLNDMKSLGSVCSGGRYDHLTKNFSKEDLQGVGASIGIDRLIVALSGMQLLDERSTQAKVLIACMNEEYFSYANRLAESLRQSGIFSEVYPEAQKIKKPFSYANHKGHEFVAIIGEEEFKSETLSLKNMHSGMQLNCLSFLKALEIIGENDEDL</sequence>
<proteinExistence type="inferred from homology"/>